<evidence type="ECO:0000250" key="1"/>
<evidence type="ECO:0000255" key="2">
    <source>
        <dbReference type="PROSITE-ProRule" id="PRU00541"/>
    </source>
</evidence>
<evidence type="ECO:0000255" key="3">
    <source>
        <dbReference type="PROSITE-ProRule" id="PRU00542"/>
    </source>
</evidence>
<evidence type="ECO:0000256" key="4">
    <source>
        <dbReference type="SAM" id="MobiDB-lite"/>
    </source>
</evidence>
<evidence type="ECO:0000305" key="5"/>
<reference key="1">
    <citation type="journal article" date="2004" name="Nature">
        <title>Genome evolution in yeasts.</title>
        <authorList>
            <person name="Dujon B."/>
            <person name="Sherman D."/>
            <person name="Fischer G."/>
            <person name="Durrens P."/>
            <person name="Casaregola S."/>
            <person name="Lafontaine I."/>
            <person name="de Montigny J."/>
            <person name="Marck C."/>
            <person name="Neuveglise C."/>
            <person name="Talla E."/>
            <person name="Goffard N."/>
            <person name="Frangeul L."/>
            <person name="Aigle M."/>
            <person name="Anthouard V."/>
            <person name="Babour A."/>
            <person name="Barbe V."/>
            <person name="Barnay S."/>
            <person name="Blanchin S."/>
            <person name="Beckerich J.-M."/>
            <person name="Beyne E."/>
            <person name="Bleykasten C."/>
            <person name="Boisrame A."/>
            <person name="Boyer J."/>
            <person name="Cattolico L."/>
            <person name="Confanioleri F."/>
            <person name="de Daruvar A."/>
            <person name="Despons L."/>
            <person name="Fabre E."/>
            <person name="Fairhead C."/>
            <person name="Ferry-Dumazet H."/>
            <person name="Groppi A."/>
            <person name="Hantraye F."/>
            <person name="Hennequin C."/>
            <person name="Jauniaux N."/>
            <person name="Joyet P."/>
            <person name="Kachouri R."/>
            <person name="Kerrest A."/>
            <person name="Koszul R."/>
            <person name="Lemaire M."/>
            <person name="Lesur I."/>
            <person name="Ma L."/>
            <person name="Muller H."/>
            <person name="Nicaud J.-M."/>
            <person name="Nikolski M."/>
            <person name="Oztas S."/>
            <person name="Ozier-Kalogeropoulos O."/>
            <person name="Pellenz S."/>
            <person name="Potier S."/>
            <person name="Richard G.-F."/>
            <person name="Straub M.-L."/>
            <person name="Suleau A."/>
            <person name="Swennen D."/>
            <person name="Tekaia F."/>
            <person name="Wesolowski-Louvel M."/>
            <person name="Westhof E."/>
            <person name="Wirth B."/>
            <person name="Zeniou-Meyer M."/>
            <person name="Zivanovic Y."/>
            <person name="Bolotin-Fukuhara M."/>
            <person name="Thierry A."/>
            <person name="Bouchier C."/>
            <person name="Caudron B."/>
            <person name="Scarpelli C."/>
            <person name="Gaillardin C."/>
            <person name="Weissenbach J."/>
            <person name="Wincker P."/>
            <person name="Souciet J.-L."/>
        </authorList>
    </citation>
    <scope>NUCLEOTIDE SEQUENCE [LARGE SCALE GENOMIC DNA]</scope>
    <source>
        <strain>ATCC 8585 / CBS 2359 / DSM 70799 / NBRC 1267 / NRRL Y-1140 / WM37</strain>
    </source>
</reference>
<feature type="chain" id="PRO_0000232306" description="ATP-dependent RNA helicase ROK1">
    <location>
        <begin position="1"/>
        <end position="579"/>
    </location>
</feature>
<feature type="domain" description="Helicase ATP-binding" evidence="2">
    <location>
        <begin position="164"/>
        <end position="344"/>
    </location>
</feature>
<feature type="domain" description="Helicase C-terminal" evidence="3">
    <location>
        <begin position="355"/>
        <end position="517"/>
    </location>
</feature>
<feature type="region of interest" description="Disordered" evidence="4">
    <location>
        <begin position="1"/>
        <end position="99"/>
    </location>
</feature>
<feature type="region of interest" description="Disordered" evidence="4">
    <location>
        <begin position="520"/>
        <end position="579"/>
    </location>
</feature>
<feature type="short sequence motif" description="Q motif">
    <location>
        <begin position="133"/>
        <end position="161"/>
    </location>
</feature>
<feature type="short sequence motif" description="DEAD box">
    <location>
        <begin position="291"/>
        <end position="294"/>
    </location>
</feature>
<feature type="compositionally biased region" description="Basic and acidic residues" evidence="4">
    <location>
        <begin position="45"/>
        <end position="59"/>
    </location>
</feature>
<feature type="compositionally biased region" description="Acidic residues" evidence="4">
    <location>
        <begin position="76"/>
        <end position="97"/>
    </location>
</feature>
<feature type="compositionally biased region" description="Basic and acidic residues" evidence="4">
    <location>
        <begin position="520"/>
        <end position="538"/>
    </location>
</feature>
<feature type="compositionally biased region" description="Acidic residues" evidence="4">
    <location>
        <begin position="569"/>
        <end position="579"/>
    </location>
</feature>
<feature type="binding site" evidence="2">
    <location>
        <begin position="177"/>
        <end position="184"/>
    </location>
    <ligand>
        <name>ATP</name>
        <dbReference type="ChEBI" id="CHEBI:30616"/>
    </ligand>
</feature>
<dbReference type="EC" id="3.6.4.13"/>
<dbReference type="EMBL" id="CR382123">
    <property type="protein sequence ID" value="CAH01829.1"/>
    <property type="molecule type" value="Genomic_DNA"/>
</dbReference>
<dbReference type="RefSeq" id="XP_452978.1">
    <property type="nucleotide sequence ID" value="XM_452978.1"/>
</dbReference>
<dbReference type="SMR" id="Q6CSW1"/>
<dbReference type="FunCoup" id="Q6CSW1">
    <property type="interactions" value="1111"/>
</dbReference>
<dbReference type="STRING" id="284590.Q6CSW1"/>
<dbReference type="PaxDb" id="284590-Q6CSW1"/>
<dbReference type="KEGG" id="kla:KLLA0_C17424g"/>
<dbReference type="eggNOG" id="KOG0344">
    <property type="taxonomic scope" value="Eukaryota"/>
</dbReference>
<dbReference type="HOGENOM" id="CLU_003041_1_4_1"/>
<dbReference type="InParanoid" id="Q6CSW1"/>
<dbReference type="OMA" id="EMAHSIM"/>
<dbReference type="Proteomes" id="UP000000598">
    <property type="component" value="Chromosome C"/>
</dbReference>
<dbReference type="GO" id="GO:0005829">
    <property type="term" value="C:cytosol"/>
    <property type="evidence" value="ECO:0007669"/>
    <property type="project" value="TreeGrafter"/>
</dbReference>
<dbReference type="GO" id="GO:0005730">
    <property type="term" value="C:nucleolus"/>
    <property type="evidence" value="ECO:0007669"/>
    <property type="project" value="UniProtKB-SubCell"/>
</dbReference>
<dbReference type="GO" id="GO:0005524">
    <property type="term" value="F:ATP binding"/>
    <property type="evidence" value="ECO:0007669"/>
    <property type="project" value="UniProtKB-KW"/>
</dbReference>
<dbReference type="GO" id="GO:0016887">
    <property type="term" value="F:ATP hydrolysis activity"/>
    <property type="evidence" value="ECO:0007669"/>
    <property type="project" value="RHEA"/>
</dbReference>
<dbReference type="GO" id="GO:0003723">
    <property type="term" value="F:RNA binding"/>
    <property type="evidence" value="ECO:0007669"/>
    <property type="project" value="UniProtKB-KW"/>
</dbReference>
<dbReference type="GO" id="GO:0003724">
    <property type="term" value="F:RNA helicase activity"/>
    <property type="evidence" value="ECO:0007669"/>
    <property type="project" value="UniProtKB-EC"/>
</dbReference>
<dbReference type="GO" id="GO:0030490">
    <property type="term" value="P:maturation of SSU-rRNA"/>
    <property type="evidence" value="ECO:0007669"/>
    <property type="project" value="InterPro"/>
</dbReference>
<dbReference type="CDD" id="cd17957">
    <property type="entry name" value="DEADc_DDX52"/>
    <property type="match status" value="1"/>
</dbReference>
<dbReference type="CDD" id="cd18787">
    <property type="entry name" value="SF2_C_DEAD"/>
    <property type="match status" value="1"/>
</dbReference>
<dbReference type="FunFam" id="3.40.50.300:FF:000759">
    <property type="entry name" value="probable ATP-dependent RNA helicase DDX52"/>
    <property type="match status" value="1"/>
</dbReference>
<dbReference type="Gene3D" id="3.40.50.300">
    <property type="entry name" value="P-loop containing nucleotide triphosphate hydrolases"/>
    <property type="match status" value="2"/>
</dbReference>
<dbReference type="InterPro" id="IPR044764">
    <property type="entry name" value="DDX52/Rok1_DEADc"/>
</dbReference>
<dbReference type="InterPro" id="IPR011545">
    <property type="entry name" value="DEAD/DEAH_box_helicase_dom"/>
</dbReference>
<dbReference type="InterPro" id="IPR050079">
    <property type="entry name" value="DEAD_box_RNA_helicase"/>
</dbReference>
<dbReference type="InterPro" id="IPR014001">
    <property type="entry name" value="Helicase_ATP-bd"/>
</dbReference>
<dbReference type="InterPro" id="IPR001650">
    <property type="entry name" value="Helicase_C-like"/>
</dbReference>
<dbReference type="InterPro" id="IPR027417">
    <property type="entry name" value="P-loop_NTPase"/>
</dbReference>
<dbReference type="InterPro" id="IPR000629">
    <property type="entry name" value="RNA-helicase_DEAD-box_CS"/>
</dbReference>
<dbReference type="InterPro" id="IPR014014">
    <property type="entry name" value="RNA_helicase_DEAD_Q_motif"/>
</dbReference>
<dbReference type="PANTHER" id="PTHR47959">
    <property type="entry name" value="ATP-DEPENDENT RNA HELICASE RHLE-RELATED"/>
    <property type="match status" value="1"/>
</dbReference>
<dbReference type="PANTHER" id="PTHR47959:SF15">
    <property type="entry name" value="RNA HELICASE"/>
    <property type="match status" value="1"/>
</dbReference>
<dbReference type="Pfam" id="PF00270">
    <property type="entry name" value="DEAD"/>
    <property type="match status" value="1"/>
</dbReference>
<dbReference type="Pfam" id="PF00271">
    <property type="entry name" value="Helicase_C"/>
    <property type="match status" value="1"/>
</dbReference>
<dbReference type="SMART" id="SM00487">
    <property type="entry name" value="DEXDc"/>
    <property type="match status" value="1"/>
</dbReference>
<dbReference type="SMART" id="SM00490">
    <property type="entry name" value="HELICc"/>
    <property type="match status" value="1"/>
</dbReference>
<dbReference type="SUPFAM" id="SSF52540">
    <property type="entry name" value="P-loop containing nucleoside triphosphate hydrolases"/>
    <property type="match status" value="1"/>
</dbReference>
<dbReference type="PROSITE" id="PS00039">
    <property type="entry name" value="DEAD_ATP_HELICASE"/>
    <property type="match status" value="1"/>
</dbReference>
<dbReference type="PROSITE" id="PS51192">
    <property type="entry name" value="HELICASE_ATP_BIND_1"/>
    <property type="match status" value="1"/>
</dbReference>
<dbReference type="PROSITE" id="PS51194">
    <property type="entry name" value="HELICASE_CTER"/>
    <property type="match status" value="1"/>
</dbReference>
<dbReference type="PROSITE" id="PS51195">
    <property type="entry name" value="Q_MOTIF"/>
    <property type="match status" value="1"/>
</dbReference>
<accession>Q6CSW1</accession>
<name>ROK1_KLULA</name>
<gene>
    <name type="primary">ROK1</name>
    <name type="ordered locus">KLLA0C17424g</name>
</gene>
<protein>
    <recommendedName>
        <fullName>ATP-dependent RNA helicase ROK1</fullName>
        <ecNumber>3.6.4.13</ecNumber>
    </recommendedName>
</protein>
<comment type="function">
    <text>ATP-dependent RNA helicase involved in 40S ribosomal subunit biogenesis. Required for the processing and cleavage of 35S pre-rRNA at sites A0, A1, and A2, leading to mature 18S rRNA.</text>
</comment>
<comment type="catalytic activity">
    <reaction>
        <text>ATP + H2O = ADP + phosphate + H(+)</text>
        <dbReference type="Rhea" id="RHEA:13065"/>
        <dbReference type="ChEBI" id="CHEBI:15377"/>
        <dbReference type="ChEBI" id="CHEBI:15378"/>
        <dbReference type="ChEBI" id="CHEBI:30616"/>
        <dbReference type="ChEBI" id="CHEBI:43474"/>
        <dbReference type="ChEBI" id="CHEBI:456216"/>
        <dbReference type="EC" id="3.6.4.13"/>
    </reaction>
</comment>
<comment type="subunit">
    <text evidence="1">Interacts with the U3 snoRNA and is associated with the 90S and 40S pre-ribosomes.</text>
</comment>
<comment type="subcellular location">
    <subcellularLocation>
        <location evidence="1">Nucleus</location>
        <location evidence="1">Nucleolus</location>
    </subcellularLocation>
</comment>
<comment type="domain">
    <text>The Q motif is unique to and characteristic of the DEAD box family of RNA helicases and controls ATP binding and hydrolysis.</text>
</comment>
<comment type="similarity">
    <text evidence="5">Belongs to the DEAD box helicase family. DDX52/ROK1 subfamily.</text>
</comment>
<proteinExistence type="inferred from homology"/>
<organism>
    <name type="scientific">Kluyveromyces lactis (strain ATCC 8585 / CBS 2359 / DSM 70799 / NBRC 1267 / NRRL Y-1140 / WM37)</name>
    <name type="common">Yeast</name>
    <name type="synonym">Candida sphaerica</name>
    <dbReference type="NCBI Taxonomy" id="284590"/>
    <lineage>
        <taxon>Eukaryota</taxon>
        <taxon>Fungi</taxon>
        <taxon>Dikarya</taxon>
        <taxon>Ascomycota</taxon>
        <taxon>Saccharomycotina</taxon>
        <taxon>Saccharomycetes</taxon>
        <taxon>Saccharomycetales</taxon>
        <taxon>Saccharomycetaceae</taxon>
        <taxon>Kluyveromyces</taxon>
    </lineage>
</organism>
<sequence length="579" mass="65203">MDIFRVLTRGASIRKNGDSNRTQSADFSMANEKKSKTAGSSSTPARDEQQLTKELDFFRNKKIMNKVKSESTKGEGEDEVQEDNQEEDEDHADDETELSGKIITKQDALKLRKSYQGNVSGNSVPLPIGSFEDLITRFQFDKRLLNNLIENNFTEPTPIQSESIPILLHERDMIACAPTGSGKTLAFLIPLLQQIINDKTTVGLKGLIISPTKELANQIFIECSKLANKIYLDKKRPLQVALLSKSLSSKLKNKVISEDKYDIIISTPLRLITVVQEEALNLGKVKHLIFDEADKLFDKTFVEQTDDILSSCTDPHLRKTMFSATIPSNVEEIAQTIMNDPIRVIIGHKEAANINIDQQLVFCGNEEGKLIAIRQLVLEGEFKPPVIIFLESITRAKALFHELLYDKLNVDVIHAERTQVQRDKIIERFKSGDLWCLICTDVLARGVDFKGVNLVINYDVPRSAQAYVHRIGRTGRGGRSGKAITFYTKQDSLAIKPIINVMKQSGCEVSEWMQKISSMSKREKESLKKGKGHVERKQISTVPKVVKQKKRQRREMIEASKKRKLSVSDAEEEAGNDST</sequence>
<keyword id="KW-0067">ATP-binding</keyword>
<keyword id="KW-0347">Helicase</keyword>
<keyword id="KW-0378">Hydrolase</keyword>
<keyword id="KW-0547">Nucleotide-binding</keyword>
<keyword id="KW-0539">Nucleus</keyword>
<keyword id="KW-1185">Reference proteome</keyword>
<keyword id="KW-0690">Ribosome biogenesis</keyword>
<keyword id="KW-0694">RNA-binding</keyword>
<keyword id="KW-0698">rRNA processing</keyword>